<protein>
    <recommendedName>
        <fullName>Putative small proline-rich protein 2J</fullName>
    </recommendedName>
</protein>
<reference key="1">
    <citation type="journal article" date="1999" name="Genomics">
        <title>Mouse Sprr2 genes: a clustered family of genes showing differential expression in epithelial tissues.</title>
        <authorList>
            <person name="Song H.J."/>
            <person name="Poy G."/>
            <person name="Darwiche N."/>
            <person name="Lichti U."/>
            <person name="Kuroki T."/>
            <person name="Steinert P.M."/>
            <person name="Kartasova T."/>
        </authorList>
    </citation>
    <scope>NUCLEOTIDE SEQUENCE [GENOMIC DNA]</scope>
    <source>
        <strain>129/SvJ</strain>
    </source>
</reference>
<reference key="2">
    <citation type="journal article" date="2003" name="Mamm. Genome">
        <title>Mouse Sprr locus: a tandem array of coordinately regulated genes.</title>
        <authorList>
            <person name="Patel S."/>
            <person name="Kartasova T."/>
            <person name="Segre J.A."/>
        </authorList>
    </citation>
    <scope>NUCLEOTIDE SEQUENCE [MRNA]</scope>
    <source>
        <strain>C57BL/6J</strain>
    </source>
</reference>
<reference key="3">
    <citation type="journal article" date="2009" name="PLoS Biol.">
        <title>Lineage-specific biology revealed by a finished genome assembly of the mouse.</title>
        <authorList>
            <person name="Church D.M."/>
            <person name="Goodstadt L."/>
            <person name="Hillier L.W."/>
            <person name="Zody M.C."/>
            <person name="Goldstein S."/>
            <person name="She X."/>
            <person name="Bult C.J."/>
            <person name="Agarwala R."/>
            <person name="Cherry J.L."/>
            <person name="DiCuccio M."/>
            <person name="Hlavina W."/>
            <person name="Kapustin Y."/>
            <person name="Meric P."/>
            <person name="Maglott D."/>
            <person name="Birtle Z."/>
            <person name="Marques A.C."/>
            <person name="Graves T."/>
            <person name="Zhou S."/>
            <person name="Teague B."/>
            <person name="Potamousis K."/>
            <person name="Churas C."/>
            <person name="Place M."/>
            <person name="Herschleb J."/>
            <person name="Runnheim R."/>
            <person name="Forrest D."/>
            <person name="Amos-Landgraf J."/>
            <person name="Schwartz D.C."/>
            <person name="Cheng Z."/>
            <person name="Lindblad-Toh K."/>
            <person name="Eichler E.E."/>
            <person name="Ponting C.P."/>
        </authorList>
    </citation>
    <scope>NUCLEOTIDE SEQUENCE [LARGE SCALE GENOMIC DNA]</scope>
    <source>
        <strain>C57BL/6J</strain>
    </source>
</reference>
<reference key="4">
    <citation type="journal article" date="2004" name="Mol. Cells">
        <title>Estrogen regulates the expression of the small proline-rich 2 gene family in the mouse uterus.</title>
        <authorList>
            <person name="Hong S.H."/>
            <person name="Nah H.Y."/>
            <person name="Lee J.Y."/>
            <person name="Lee Y.J."/>
            <person name="Lee J.W."/>
            <person name="Gye M.C."/>
            <person name="Kim C.H."/>
            <person name="Kang B.M."/>
            <person name="Kim M.K."/>
        </authorList>
    </citation>
    <scope>TISSUE SPECIFICITY</scope>
</reference>
<name>SPR2J_MOUSE</name>
<proteinExistence type="evidence at transcript level"/>
<organism>
    <name type="scientific">Mus musculus</name>
    <name type="common">Mouse</name>
    <dbReference type="NCBI Taxonomy" id="10090"/>
    <lineage>
        <taxon>Eukaryota</taxon>
        <taxon>Metazoa</taxon>
        <taxon>Chordata</taxon>
        <taxon>Craniata</taxon>
        <taxon>Vertebrata</taxon>
        <taxon>Euteleostomi</taxon>
        <taxon>Mammalia</taxon>
        <taxon>Eutheria</taxon>
        <taxon>Euarchontoglires</taxon>
        <taxon>Glires</taxon>
        <taxon>Rodentia</taxon>
        <taxon>Myomorpha</taxon>
        <taxon>Muroidea</taxon>
        <taxon>Muridae</taxon>
        <taxon>Murinae</taxon>
        <taxon>Mus</taxon>
        <taxon>Mus</taxon>
    </lineage>
</organism>
<sequence length="109" mass="11809">MSYQEQQCKQVCQPPLVCPPRSAQSPVLCQSAPSLVLLQSAQSPIHCQSALSHAHLSHASRNALLCNLLHHASKSAHPRANKGFSSLQNQKKRTESILHKSIATPPSSI</sequence>
<dbReference type="EMBL" id="AJ005568">
    <property type="protein sequence ID" value="CAA06597.1"/>
    <property type="molecule type" value="Genomic_DNA"/>
</dbReference>
<dbReference type="EMBL" id="AY158994">
    <property type="protein sequence ID" value="AAN86831.1"/>
    <property type="molecule type" value="mRNA"/>
</dbReference>
<dbReference type="EMBL" id="AC127036">
    <property type="status" value="NOT_ANNOTATED_CDS"/>
    <property type="molecule type" value="Genomic_DNA"/>
</dbReference>
<dbReference type="STRING" id="10090.ENSMUSP00000029533"/>
<dbReference type="PaxDb" id="10090-ENSMUSP00000029533"/>
<dbReference type="Pumba" id="O70561"/>
<dbReference type="Ensembl" id="ENSMUST00000029533.3">
    <property type="protein sequence ID" value="ENSMUSP00000029533.2"/>
    <property type="gene ID" value="ENSMUSG00000027925.3"/>
</dbReference>
<dbReference type="UCSC" id="uc008qdz.1">
    <property type="organism name" value="mouse"/>
</dbReference>
<dbReference type="AGR" id="MGI:1330345"/>
<dbReference type="MGI" id="MGI:1330345">
    <property type="gene designation" value="Sprr2j-ps"/>
</dbReference>
<dbReference type="VEuPathDB" id="HostDB:ENSMUSG00000027925"/>
<dbReference type="GeneTree" id="ENSGT01090000260461"/>
<dbReference type="HOGENOM" id="CLU_2190065_0_0_1"/>
<dbReference type="InParanoid" id="O70561"/>
<dbReference type="OMA" id="SIHEFKM"/>
<dbReference type="OrthoDB" id="10546842at2759"/>
<dbReference type="Proteomes" id="UP000000589">
    <property type="component" value="Chromosome 3"/>
</dbReference>
<dbReference type="RNAct" id="O70561">
    <property type="molecule type" value="protein"/>
</dbReference>
<dbReference type="Bgee" id="ENSMUSG00000027925">
    <property type="expression patterns" value="Expressed in superior surface of tongue and 42 other cell types or tissues"/>
</dbReference>
<dbReference type="GO" id="GO:0005737">
    <property type="term" value="C:cytoplasm"/>
    <property type="evidence" value="ECO:0007669"/>
    <property type="project" value="UniProtKB-SubCell"/>
</dbReference>
<dbReference type="GO" id="GO:0031424">
    <property type="term" value="P:keratinization"/>
    <property type="evidence" value="ECO:0007669"/>
    <property type="project" value="UniProtKB-KW"/>
</dbReference>
<accession>O70561</accession>
<keyword id="KW-0963">Cytoplasm</keyword>
<keyword id="KW-0417">Keratinization</keyword>
<keyword id="KW-1185">Reference proteome</keyword>
<keyword id="KW-0677">Repeat</keyword>
<comment type="function">
    <text evidence="1">Cross-linked envelope protein of keratinocytes. It is a keratinocyte protein that first appears in the cell cytosol, but ultimately becomes cross-linked to membrane proteins by transglutaminase. All that results in the formation of an insoluble envelope beneath the plasma membrane (By similarity).</text>
</comment>
<comment type="subcellular location">
    <subcellularLocation>
        <location evidence="1">Cytoplasm</location>
    </subcellularLocation>
</comment>
<comment type="tissue specificity">
    <text evidence="3">Not expressed in uterus.</text>
</comment>
<comment type="similarity">
    <text evidence="4">Belongs to the cornifin (SPRR) family.</text>
</comment>
<comment type="caution">
    <text evidence="4">Defined as a pseudogene by MGI. Compared to other members of the family it contains a frameshift in position 20. However, proteomics data suggest the existence of the protein.</text>
</comment>
<evidence type="ECO:0000250" key="1"/>
<evidence type="ECO:0000256" key="2">
    <source>
        <dbReference type="SAM" id="MobiDB-lite"/>
    </source>
</evidence>
<evidence type="ECO:0000269" key="3">
    <source>
    </source>
</evidence>
<evidence type="ECO:0000305" key="4"/>
<feature type="chain" id="PRO_0000150022" description="Putative small proline-rich protein 2J">
    <location>
        <begin position="1"/>
        <end position="109"/>
    </location>
</feature>
<feature type="repeat" description="1">
    <location>
        <begin position="21"/>
        <end position="29"/>
    </location>
</feature>
<feature type="repeat" description="2">
    <location>
        <begin position="30"/>
        <end position="38"/>
    </location>
</feature>
<feature type="repeat" description="3">
    <location>
        <begin position="39"/>
        <end position="47"/>
    </location>
</feature>
<feature type="repeat" description="4">
    <location>
        <begin position="48"/>
        <end position="56"/>
    </location>
</feature>
<feature type="repeat" description="5">
    <location>
        <begin position="57"/>
        <end position="65"/>
    </location>
</feature>
<feature type="region of interest" description="5 X 9 AA approximate tandem repeats">
    <location>
        <begin position="21"/>
        <end position="65"/>
    </location>
</feature>
<feature type="region of interest" description="Disordered" evidence="2">
    <location>
        <begin position="76"/>
        <end position="109"/>
    </location>
</feature>
<feature type="sequence conflict" description="In Ref. 1; CAA06597 and 2; AAN86831." evidence="4" ref="1 2">
    <original>S</original>
    <variation>P</variation>
    <location>
        <position position="101"/>
    </location>
</feature>
<gene>
    <name type="primary">Sprr2j</name>
    <name type="synonym">Sprr2j-ps</name>
</gene>